<organism>
    <name type="scientific">Clostridium acetobutylicum (strain ATCC 824 / DSM 792 / JCM 1419 / IAM 19013 / LMG 5710 / NBRC 13948 / NRRL B-527 / VKM B-1787 / 2291 / W)</name>
    <dbReference type="NCBI Taxonomy" id="272562"/>
    <lineage>
        <taxon>Bacteria</taxon>
        <taxon>Bacillati</taxon>
        <taxon>Bacillota</taxon>
        <taxon>Clostridia</taxon>
        <taxon>Eubacteriales</taxon>
        <taxon>Clostridiaceae</taxon>
        <taxon>Clostridium</taxon>
    </lineage>
</organism>
<comment type="function">
    <text evidence="1">Catalyzes the base-exchange of a guanine (G) residue with the queuine precursor 7-aminomethyl-7-deazaguanine (PreQ1) at position 34 (anticodon wobble position) in tRNAs with GU(N) anticodons (tRNA-Asp, -Asn, -His and -Tyr). Catalysis occurs through a double-displacement mechanism. The nucleophile active site attacks the C1' of nucleotide 34 to detach the guanine base from the RNA, forming a covalent enzyme-RNA intermediate. The proton acceptor active site deprotonates the incoming PreQ1, allowing a nucleophilic attack on the C1' of the ribose to form the product. After dissociation, two additional enzymatic reactions on the tRNA convert PreQ1 to queuine (Q), resulting in the hypermodified nucleoside queuosine (7-(((4,5-cis-dihydroxy-2-cyclopenten-1-yl)amino)methyl)-7-deazaguanosine).</text>
</comment>
<comment type="catalytic activity">
    <reaction evidence="1">
        <text>7-aminomethyl-7-carbaguanine + guanosine(34) in tRNA = 7-aminomethyl-7-carbaguanosine(34) in tRNA + guanine</text>
        <dbReference type="Rhea" id="RHEA:24104"/>
        <dbReference type="Rhea" id="RHEA-COMP:10341"/>
        <dbReference type="Rhea" id="RHEA-COMP:10342"/>
        <dbReference type="ChEBI" id="CHEBI:16235"/>
        <dbReference type="ChEBI" id="CHEBI:58703"/>
        <dbReference type="ChEBI" id="CHEBI:74269"/>
        <dbReference type="ChEBI" id="CHEBI:82833"/>
        <dbReference type="EC" id="2.4.2.29"/>
    </reaction>
</comment>
<comment type="cofactor">
    <cofactor evidence="1">
        <name>Zn(2+)</name>
        <dbReference type="ChEBI" id="CHEBI:29105"/>
    </cofactor>
    <text evidence="1">Binds 1 zinc ion per subunit.</text>
</comment>
<comment type="pathway">
    <text evidence="1">tRNA modification; tRNA-queuosine biosynthesis.</text>
</comment>
<comment type="subunit">
    <text evidence="1">Homodimer. Within each dimer, one monomer is responsible for RNA recognition and catalysis, while the other monomer binds to the replacement base PreQ1.</text>
</comment>
<comment type="similarity">
    <text evidence="1">Belongs to the queuine tRNA-ribosyltransferase family.</text>
</comment>
<proteinExistence type="inferred from homology"/>
<feature type="chain" id="PRO_0000135467" description="Queuine tRNA-ribosyltransferase">
    <location>
        <begin position="1"/>
        <end position="376"/>
    </location>
</feature>
<feature type="region of interest" description="RNA binding" evidence="1">
    <location>
        <begin position="252"/>
        <end position="258"/>
    </location>
</feature>
<feature type="region of interest" description="RNA binding; important for wobble base 34 recognition" evidence="1">
    <location>
        <begin position="276"/>
        <end position="280"/>
    </location>
</feature>
<feature type="active site" description="Proton acceptor" evidence="1">
    <location>
        <position position="89"/>
    </location>
</feature>
<feature type="active site" description="Nucleophile" evidence="1">
    <location>
        <position position="271"/>
    </location>
</feature>
<feature type="binding site" evidence="1">
    <location>
        <begin position="89"/>
        <end position="93"/>
    </location>
    <ligand>
        <name>substrate</name>
    </ligand>
</feature>
<feature type="binding site" evidence="1">
    <location>
        <position position="143"/>
    </location>
    <ligand>
        <name>substrate</name>
    </ligand>
</feature>
<feature type="binding site" evidence="1">
    <location>
        <position position="194"/>
    </location>
    <ligand>
        <name>substrate</name>
    </ligand>
</feature>
<feature type="binding site" evidence="1">
    <location>
        <position position="221"/>
    </location>
    <ligand>
        <name>substrate</name>
    </ligand>
</feature>
<feature type="binding site" evidence="1">
    <location>
        <position position="309"/>
    </location>
    <ligand>
        <name>Zn(2+)</name>
        <dbReference type="ChEBI" id="CHEBI:29105"/>
    </ligand>
</feature>
<feature type="binding site" evidence="1">
    <location>
        <position position="311"/>
    </location>
    <ligand>
        <name>Zn(2+)</name>
        <dbReference type="ChEBI" id="CHEBI:29105"/>
    </ligand>
</feature>
<feature type="binding site" evidence="1">
    <location>
        <position position="314"/>
    </location>
    <ligand>
        <name>Zn(2+)</name>
        <dbReference type="ChEBI" id="CHEBI:29105"/>
    </ligand>
</feature>
<feature type="binding site" evidence="1">
    <location>
        <position position="340"/>
    </location>
    <ligand>
        <name>Zn(2+)</name>
        <dbReference type="ChEBI" id="CHEBI:29105"/>
    </ligand>
</feature>
<name>TGT_CLOAB</name>
<keyword id="KW-0328">Glycosyltransferase</keyword>
<keyword id="KW-0479">Metal-binding</keyword>
<keyword id="KW-0671">Queuosine biosynthesis</keyword>
<keyword id="KW-1185">Reference proteome</keyword>
<keyword id="KW-0808">Transferase</keyword>
<keyword id="KW-0819">tRNA processing</keyword>
<keyword id="KW-0862">Zinc</keyword>
<gene>
    <name evidence="1" type="primary">tgt</name>
    <name type="ordered locus">CA_C2282</name>
</gene>
<protein>
    <recommendedName>
        <fullName evidence="1">Queuine tRNA-ribosyltransferase</fullName>
        <ecNumber evidence="1">2.4.2.29</ecNumber>
    </recommendedName>
    <alternativeName>
        <fullName evidence="1">Guanine insertion enzyme</fullName>
    </alternativeName>
    <alternativeName>
        <fullName evidence="1">tRNA-guanine transglycosylase</fullName>
    </alternativeName>
</protein>
<evidence type="ECO:0000255" key="1">
    <source>
        <dbReference type="HAMAP-Rule" id="MF_00168"/>
    </source>
</evidence>
<reference key="1">
    <citation type="journal article" date="2001" name="J. Bacteriol.">
        <title>Genome sequence and comparative analysis of the solvent-producing bacterium Clostridium acetobutylicum.</title>
        <authorList>
            <person name="Noelling J."/>
            <person name="Breton G."/>
            <person name="Omelchenko M.V."/>
            <person name="Makarova K.S."/>
            <person name="Zeng Q."/>
            <person name="Gibson R."/>
            <person name="Lee H.M."/>
            <person name="Dubois J."/>
            <person name="Qiu D."/>
            <person name="Hitti J."/>
            <person name="Wolf Y.I."/>
            <person name="Tatusov R.L."/>
            <person name="Sabathe F."/>
            <person name="Doucette-Stamm L.A."/>
            <person name="Soucaille P."/>
            <person name="Daly M.J."/>
            <person name="Bennett G.N."/>
            <person name="Koonin E.V."/>
            <person name="Smith D.R."/>
        </authorList>
    </citation>
    <scope>NUCLEOTIDE SEQUENCE [LARGE SCALE GENOMIC DNA]</scope>
    <source>
        <strain>ATCC 824 / DSM 792 / JCM 1419 / IAM 19013 / LMG 5710 / NBRC 13948 / NRRL B-527 / VKM B-1787 / 2291 / W</strain>
    </source>
</reference>
<accession>Q97GT3</accession>
<dbReference type="EC" id="2.4.2.29" evidence="1"/>
<dbReference type="EMBL" id="AE001437">
    <property type="protein sequence ID" value="AAK80239.1"/>
    <property type="molecule type" value="Genomic_DNA"/>
</dbReference>
<dbReference type="PIR" id="D97181">
    <property type="entry name" value="D97181"/>
</dbReference>
<dbReference type="RefSeq" id="NP_348899.1">
    <property type="nucleotide sequence ID" value="NC_003030.1"/>
</dbReference>
<dbReference type="RefSeq" id="WP_010965580.1">
    <property type="nucleotide sequence ID" value="NC_003030.1"/>
</dbReference>
<dbReference type="SMR" id="Q97GT3"/>
<dbReference type="STRING" id="272562.CA_C2282"/>
<dbReference type="GeneID" id="44998760"/>
<dbReference type="KEGG" id="cac:CA_C2282"/>
<dbReference type="PATRIC" id="fig|272562.8.peg.2481"/>
<dbReference type="eggNOG" id="COG0343">
    <property type="taxonomic scope" value="Bacteria"/>
</dbReference>
<dbReference type="HOGENOM" id="CLU_022060_0_1_9"/>
<dbReference type="OrthoDB" id="9805417at2"/>
<dbReference type="UniPathway" id="UPA00392"/>
<dbReference type="Proteomes" id="UP000000814">
    <property type="component" value="Chromosome"/>
</dbReference>
<dbReference type="GO" id="GO:0005829">
    <property type="term" value="C:cytosol"/>
    <property type="evidence" value="ECO:0007669"/>
    <property type="project" value="TreeGrafter"/>
</dbReference>
<dbReference type="GO" id="GO:0046872">
    <property type="term" value="F:metal ion binding"/>
    <property type="evidence" value="ECO:0007669"/>
    <property type="project" value="UniProtKB-KW"/>
</dbReference>
<dbReference type="GO" id="GO:0008479">
    <property type="term" value="F:tRNA-guanosine(34) queuine transglycosylase activity"/>
    <property type="evidence" value="ECO:0007669"/>
    <property type="project" value="UniProtKB-UniRule"/>
</dbReference>
<dbReference type="GO" id="GO:0008616">
    <property type="term" value="P:queuosine biosynthetic process"/>
    <property type="evidence" value="ECO:0007669"/>
    <property type="project" value="UniProtKB-UniRule"/>
</dbReference>
<dbReference type="GO" id="GO:0002099">
    <property type="term" value="P:tRNA wobble guanine modification"/>
    <property type="evidence" value="ECO:0007669"/>
    <property type="project" value="TreeGrafter"/>
</dbReference>
<dbReference type="GO" id="GO:0101030">
    <property type="term" value="P:tRNA-guanine transglycosylation"/>
    <property type="evidence" value="ECO:0007669"/>
    <property type="project" value="InterPro"/>
</dbReference>
<dbReference type="FunFam" id="3.20.20.105:FF:000001">
    <property type="entry name" value="Queuine tRNA-ribosyltransferase"/>
    <property type="match status" value="1"/>
</dbReference>
<dbReference type="Gene3D" id="3.20.20.105">
    <property type="entry name" value="Queuine tRNA-ribosyltransferase-like"/>
    <property type="match status" value="1"/>
</dbReference>
<dbReference type="HAMAP" id="MF_00168">
    <property type="entry name" value="Q_tRNA_Tgt"/>
    <property type="match status" value="1"/>
</dbReference>
<dbReference type="InterPro" id="IPR050076">
    <property type="entry name" value="ArchSynthase1/Queuine_TRR"/>
</dbReference>
<dbReference type="InterPro" id="IPR004803">
    <property type="entry name" value="TGT"/>
</dbReference>
<dbReference type="InterPro" id="IPR036511">
    <property type="entry name" value="TGT-like_sf"/>
</dbReference>
<dbReference type="InterPro" id="IPR002616">
    <property type="entry name" value="tRNA_ribo_trans-like"/>
</dbReference>
<dbReference type="NCBIfam" id="TIGR00430">
    <property type="entry name" value="Q_tRNA_tgt"/>
    <property type="match status" value="1"/>
</dbReference>
<dbReference type="NCBIfam" id="TIGR00449">
    <property type="entry name" value="tgt_general"/>
    <property type="match status" value="1"/>
</dbReference>
<dbReference type="PANTHER" id="PTHR46499">
    <property type="entry name" value="QUEUINE TRNA-RIBOSYLTRANSFERASE"/>
    <property type="match status" value="1"/>
</dbReference>
<dbReference type="PANTHER" id="PTHR46499:SF1">
    <property type="entry name" value="QUEUINE TRNA-RIBOSYLTRANSFERASE"/>
    <property type="match status" value="1"/>
</dbReference>
<dbReference type="Pfam" id="PF01702">
    <property type="entry name" value="TGT"/>
    <property type="match status" value="1"/>
</dbReference>
<dbReference type="SUPFAM" id="SSF51713">
    <property type="entry name" value="tRNA-guanine transglycosylase"/>
    <property type="match status" value="1"/>
</dbReference>
<sequence length="376" mass="42714">MYTLLKKTGKVRRGRFETVHGTIETPVFMNVGTLAAIKGAVSSMDLKEINCQVELSNTYHLSLRPGDDVVKKLGGLHKFMNWDRPILTDSGGFQVFSLAEIRKIKEEGVYFNSHIDGRKIFMGPEESMKIQSNLASTIAMAFDECVENPSPREYVERSVERTTRWLVRCKEELDRLNSLPDTINKKQMLFGINQGGVYDDIRIEHAKTIAKMDLDGYAIGGLAVGETHEEMYRIIDAVVPHLPQDKPIYLMGVGTPSNILEAVSRGVDFFDCVLPARNGRHGHVFTKHGKINLRNEKFELDASPIDEGCQCPTCKHYSRAYIRHLFKAKEMLAMRLCVLHNLYFYNTLMEDIRNAIDADCFEEFKNEKLKAWAGKA</sequence>